<evidence type="ECO:0000255" key="1">
    <source>
        <dbReference type="HAMAP-Rule" id="MF_00168"/>
    </source>
</evidence>
<accession>Q817W6</accession>
<keyword id="KW-0328">Glycosyltransferase</keyword>
<keyword id="KW-0479">Metal-binding</keyword>
<keyword id="KW-0671">Queuosine biosynthesis</keyword>
<keyword id="KW-1185">Reference proteome</keyword>
<keyword id="KW-0808">Transferase</keyword>
<keyword id="KW-0819">tRNA processing</keyword>
<keyword id="KW-0862">Zinc</keyword>
<comment type="function">
    <text evidence="1">Catalyzes the base-exchange of a guanine (G) residue with the queuine precursor 7-aminomethyl-7-deazaguanine (PreQ1) at position 34 (anticodon wobble position) in tRNAs with GU(N) anticodons (tRNA-Asp, -Asn, -His and -Tyr). Catalysis occurs through a double-displacement mechanism. The nucleophile active site attacks the C1' of nucleotide 34 to detach the guanine base from the RNA, forming a covalent enzyme-RNA intermediate. The proton acceptor active site deprotonates the incoming PreQ1, allowing a nucleophilic attack on the C1' of the ribose to form the product. After dissociation, two additional enzymatic reactions on the tRNA convert PreQ1 to queuine (Q), resulting in the hypermodified nucleoside queuosine (7-(((4,5-cis-dihydroxy-2-cyclopenten-1-yl)amino)methyl)-7-deazaguanosine).</text>
</comment>
<comment type="catalytic activity">
    <reaction evidence="1">
        <text>7-aminomethyl-7-carbaguanine + guanosine(34) in tRNA = 7-aminomethyl-7-carbaguanosine(34) in tRNA + guanine</text>
        <dbReference type="Rhea" id="RHEA:24104"/>
        <dbReference type="Rhea" id="RHEA-COMP:10341"/>
        <dbReference type="Rhea" id="RHEA-COMP:10342"/>
        <dbReference type="ChEBI" id="CHEBI:16235"/>
        <dbReference type="ChEBI" id="CHEBI:58703"/>
        <dbReference type="ChEBI" id="CHEBI:74269"/>
        <dbReference type="ChEBI" id="CHEBI:82833"/>
        <dbReference type="EC" id="2.4.2.29"/>
    </reaction>
</comment>
<comment type="cofactor">
    <cofactor evidence="1">
        <name>Zn(2+)</name>
        <dbReference type="ChEBI" id="CHEBI:29105"/>
    </cofactor>
    <text evidence="1">Binds 1 zinc ion per subunit.</text>
</comment>
<comment type="pathway">
    <text evidence="1">tRNA modification; tRNA-queuosine biosynthesis.</text>
</comment>
<comment type="subunit">
    <text evidence="1">Homodimer. Within each dimer, one monomer is responsible for RNA recognition and catalysis, while the other monomer binds to the replacement base PreQ1.</text>
</comment>
<comment type="similarity">
    <text evidence="1">Belongs to the queuine tRNA-ribosyltransferase family.</text>
</comment>
<gene>
    <name evidence="1" type="primary">tgt</name>
    <name type="ordered locus">BC_4411</name>
</gene>
<reference key="1">
    <citation type="journal article" date="2003" name="Nature">
        <title>Genome sequence of Bacillus cereus and comparative analysis with Bacillus anthracis.</title>
        <authorList>
            <person name="Ivanova N."/>
            <person name="Sorokin A."/>
            <person name="Anderson I."/>
            <person name="Galleron N."/>
            <person name="Candelon B."/>
            <person name="Kapatral V."/>
            <person name="Bhattacharyya A."/>
            <person name="Reznik G."/>
            <person name="Mikhailova N."/>
            <person name="Lapidus A."/>
            <person name="Chu L."/>
            <person name="Mazur M."/>
            <person name="Goltsman E."/>
            <person name="Larsen N."/>
            <person name="D'Souza M."/>
            <person name="Walunas T."/>
            <person name="Grechkin Y."/>
            <person name="Pusch G."/>
            <person name="Haselkorn R."/>
            <person name="Fonstein M."/>
            <person name="Ehrlich S.D."/>
            <person name="Overbeek R."/>
            <person name="Kyrpides N.C."/>
        </authorList>
    </citation>
    <scope>NUCLEOTIDE SEQUENCE [LARGE SCALE GENOMIC DNA]</scope>
    <source>
        <strain>ATCC 14579 / DSM 31 / CCUG 7414 / JCM 2152 / NBRC 15305 / NCIMB 9373 / NCTC 2599 / NRRL B-3711</strain>
    </source>
</reference>
<name>TGT_BACCR</name>
<sequence>MTAIRYEFIKTCKQTGARLGRVHTPHGSFDTPTFMPVGTLATVKTMSPEELKAMDSGIILSNTYHLWLRPGHEIIREAGGLHKFMNWDRAILTDSGGFQVFSLSDFRRIEEEGVHFRNHLNGDKLFLSPEKAMEIQNALGSDIMMAFDECPPFPATFEYMKKSVERTSRWAERCLKAHERPQDQGLFGIVQGGEYEELRRQSAKDLVSMDFPGYAVGGLSVGEPKDIMNRVLEFTTPLLPDNKPRYLMGVGSPDSLIDGAIRGIDMFDCVLPTRIARNGTCMTSEGRLVVKNAKFARDFGPLDPNCDCYTCKNYSRAYIRHLMKCDETFGIRLTSYHNLHFLLNLMEQVRQAIREDRLGDFREEFFEQYGFNKPNAKNF</sequence>
<protein>
    <recommendedName>
        <fullName evidence="1">Queuine tRNA-ribosyltransferase</fullName>
        <ecNumber evidence="1">2.4.2.29</ecNumber>
    </recommendedName>
    <alternativeName>
        <fullName evidence="1">Guanine insertion enzyme</fullName>
    </alternativeName>
    <alternativeName>
        <fullName evidence="1">tRNA-guanine transglycosylase</fullName>
    </alternativeName>
</protein>
<dbReference type="EC" id="2.4.2.29" evidence="1"/>
<dbReference type="EMBL" id="AE016877">
    <property type="protein sequence ID" value="AAP11324.1"/>
    <property type="molecule type" value="Genomic_DNA"/>
</dbReference>
<dbReference type="RefSeq" id="NP_834123.1">
    <property type="nucleotide sequence ID" value="NC_004722.1"/>
</dbReference>
<dbReference type="RefSeq" id="WP_000125365.1">
    <property type="nucleotide sequence ID" value="NZ_CP138336.1"/>
</dbReference>
<dbReference type="SMR" id="Q817W6"/>
<dbReference type="STRING" id="226900.BC_4411"/>
<dbReference type="GeneID" id="72451095"/>
<dbReference type="KEGG" id="bce:BC4411"/>
<dbReference type="PATRIC" id="fig|226900.8.peg.4562"/>
<dbReference type="HOGENOM" id="CLU_022060_0_1_9"/>
<dbReference type="OrthoDB" id="9805417at2"/>
<dbReference type="UniPathway" id="UPA00392"/>
<dbReference type="Proteomes" id="UP000001417">
    <property type="component" value="Chromosome"/>
</dbReference>
<dbReference type="GO" id="GO:0005737">
    <property type="term" value="C:cytoplasm"/>
    <property type="evidence" value="ECO:0000318"/>
    <property type="project" value="GO_Central"/>
</dbReference>
<dbReference type="GO" id="GO:0005829">
    <property type="term" value="C:cytosol"/>
    <property type="evidence" value="ECO:0000318"/>
    <property type="project" value="GO_Central"/>
</dbReference>
<dbReference type="GO" id="GO:0046872">
    <property type="term" value="F:metal ion binding"/>
    <property type="evidence" value="ECO:0007669"/>
    <property type="project" value="UniProtKB-KW"/>
</dbReference>
<dbReference type="GO" id="GO:0008479">
    <property type="term" value="F:tRNA-guanosine(34) queuine transglycosylase activity"/>
    <property type="evidence" value="ECO:0007669"/>
    <property type="project" value="UniProtKB-UniRule"/>
</dbReference>
<dbReference type="GO" id="GO:0008616">
    <property type="term" value="P:queuosine biosynthetic process"/>
    <property type="evidence" value="ECO:0000318"/>
    <property type="project" value="GO_Central"/>
</dbReference>
<dbReference type="GO" id="GO:0002099">
    <property type="term" value="P:tRNA wobble guanine modification"/>
    <property type="evidence" value="ECO:0000318"/>
    <property type="project" value="GO_Central"/>
</dbReference>
<dbReference type="GO" id="GO:0101030">
    <property type="term" value="P:tRNA-guanine transglycosylation"/>
    <property type="evidence" value="ECO:0007669"/>
    <property type="project" value="InterPro"/>
</dbReference>
<dbReference type="FunFam" id="3.20.20.105:FF:000001">
    <property type="entry name" value="Queuine tRNA-ribosyltransferase"/>
    <property type="match status" value="1"/>
</dbReference>
<dbReference type="Gene3D" id="3.20.20.105">
    <property type="entry name" value="Queuine tRNA-ribosyltransferase-like"/>
    <property type="match status" value="1"/>
</dbReference>
<dbReference type="HAMAP" id="MF_00168">
    <property type="entry name" value="Q_tRNA_Tgt"/>
    <property type="match status" value="1"/>
</dbReference>
<dbReference type="InterPro" id="IPR050076">
    <property type="entry name" value="ArchSynthase1/Queuine_TRR"/>
</dbReference>
<dbReference type="InterPro" id="IPR004803">
    <property type="entry name" value="TGT"/>
</dbReference>
<dbReference type="InterPro" id="IPR036511">
    <property type="entry name" value="TGT-like_sf"/>
</dbReference>
<dbReference type="InterPro" id="IPR002616">
    <property type="entry name" value="tRNA_ribo_trans-like"/>
</dbReference>
<dbReference type="NCBIfam" id="TIGR00430">
    <property type="entry name" value="Q_tRNA_tgt"/>
    <property type="match status" value="1"/>
</dbReference>
<dbReference type="NCBIfam" id="TIGR00449">
    <property type="entry name" value="tgt_general"/>
    <property type="match status" value="1"/>
</dbReference>
<dbReference type="PANTHER" id="PTHR46499">
    <property type="entry name" value="QUEUINE TRNA-RIBOSYLTRANSFERASE"/>
    <property type="match status" value="1"/>
</dbReference>
<dbReference type="PANTHER" id="PTHR46499:SF1">
    <property type="entry name" value="QUEUINE TRNA-RIBOSYLTRANSFERASE"/>
    <property type="match status" value="1"/>
</dbReference>
<dbReference type="Pfam" id="PF01702">
    <property type="entry name" value="TGT"/>
    <property type="match status" value="1"/>
</dbReference>
<dbReference type="SUPFAM" id="SSF51713">
    <property type="entry name" value="tRNA-guanine transglycosylase"/>
    <property type="match status" value="1"/>
</dbReference>
<organism>
    <name type="scientific">Bacillus cereus (strain ATCC 14579 / DSM 31 / CCUG 7414 / JCM 2152 / NBRC 15305 / NCIMB 9373 / NCTC 2599 / NRRL B-3711)</name>
    <dbReference type="NCBI Taxonomy" id="226900"/>
    <lineage>
        <taxon>Bacteria</taxon>
        <taxon>Bacillati</taxon>
        <taxon>Bacillota</taxon>
        <taxon>Bacilli</taxon>
        <taxon>Bacillales</taxon>
        <taxon>Bacillaceae</taxon>
        <taxon>Bacillus</taxon>
        <taxon>Bacillus cereus group</taxon>
    </lineage>
</organism>
<proteinExistence type="inferred from homology"/>
<feature type="chain" id="PRO_0000135446" description="Queuine tRNA-ribosyltransferase">
    <location>
        <begin position="1"/>
        <end position="379"/>
    </location>
</feature>
<feature type="region of interest" description="RNA binding" evidence="1">
    <location>
        <begin position="249"/>
        <end position="255"/>
    </location>
</feature>
<feature type="region of interest" description="RNA binding; important for wobble base 34 recognition" evidence="1">
    <location>
        <begin position="273"/>
        <end position="277"/>
    </location>
</feature>
<feature type="active site" description="Proton acceptor" evidence="1">
    <location>
        <position position="94"/>
    </location>
</feature>
<feature type="active site" description="Nucleophile" evidence="1">
    <location>
        <position position="268"/>
    </location>
</feature>
<feature type="binding site" evidence="1">
    <location>
        <begin position="94"/>
        <end position="98"/>
    </location>
    <ligand>
        <name>substrate</name>
    </ligand>
</feature>
<feature type="binding site" evidence="1">
    <location>
        <position position="148"/>
    </location>
    <ligand>
        <name>substrate</name>
    </ligand>
</feature>
<feature type="binding site" evidence="1">
    <location>
        <position position="191"/>
    </location>
    <ligand>
        <name>substrate</name>
    </ligand>
</feature>
<feature type="binding site" evidence="1">
    <location>
        <position position="218"/>
    </location>
    <ligand>
        <name>substrate</name>
    </ligand>
</feature>
<feature type="binding site" evidence="1">
    <location>
        <position position="306"/>
    </location>
    <ligand>
        <name>Zn(2+)</name>
        <dbReference type="ChEBI" id="CHEBI:29105"/>
    </ligand>
</feature>
<feature type="binding site" evidence="1">
    <location>
        <position position="308"/>
    </location>
    <ligand>
        <name>Zn(2+)</name>
        <dbReference type="ChEBI" id="CHEBI:29105"/>
    </ligand>
</feature>
<feature type="binding site" evidence="1">
    <location>
        <position position="311"/>
    </location>
    <ligand>
        <name>Zn(2+)</name>
        <dbReference type="ChEBI" id="CHEBI:29105"/>
    </ligand>
</feature>
<feature type="binding site" evidence="1">
    <location>
        <position position="337"/>
    </location>
    <ligand>
        <name>Zn(2+)</name>
        <dbReference type="ChEBI" id="CHEBI:29105"/>
    </ligand>
</feature>